<feature type="chain" id="PRO_1000123611" description="DNA-binding protein Fis">
    <location>
        <begin position="1"/>
        <end position="98"/>
    </location>
</feature>
<feature type="DNA-binding region" description="H-T-H motif" evidence="1">
    <location>
        <begin position="74"/>
        <end position="93"/>
    </location>
</feature>
<dbReference type="EMBL" id="CP001233">
    <property type="protein sequence ID" value="ACP04604.1"/>
    <property type="molecule type" value="Genomic_DNA"/>
</dbReference>
<dbReference type="RefSeq" id="WP_000462885.1">
    <property type="nucleotide sequence ID" value="NC_012578.1"/>
</dbReference>
<dbReference type="SMR" id="C3LQP6"/>
<dbReference type="GeneID" id="97171130"/>
<dbReference type="KEGG" id="vcm:VCM66_0275"/>
<dbReference type="HOGENOM" id="CLU_158040_3_0_6"/>
<dbReference type="Proteomes" id="UP000001217">
    <property type="component" value="Chromosome I"/>
</dbReference>
<dbReference type="GO" id="GO:0003700">
    <property type="term" value="F:DNA-binding transcription factor activity"/>
    <property type="evidence" value="ECO:0007669"/>
    <property type="project" value="UniProtKB-UniRule"/>
</dbReference>
<dbReference type="GO" id="GO:0043565">
    <property type="term" value="F:sequence-specific DNA binding"/>
    <property type="evidence" value="ECO:0007669"/>
    <property type="project" value="InterPro"/>
</dbReference>
<dbReference type="FunFam" id="1.10.10.60:FF:000006">
    <property type="entry name" value="DNA-binding protein Fis"/>
    <property type="match status" value="1"/>
</dbReference>
<dbReference type="Gene3D" id="1.10.10.60">
    <property type="entry name" value="Homeodomain-like"/>
    <property type="match status" value="1"/>
</dbReference>
<dbReference type="HAMAP" id="MF_00166">
    <property type="entry name" value="DNA_binding_Fis"/>
    <property type="match status" value="1"/>
</dbReference>
<dbReference type="InterPro" id="IPR005412">
    <property type="entry name" value="Fis_DNA-bd"/>
</dbReference>
<dbReference type="InterPro" id="IPR009057">
    <property type="entry name" value="Homeodomain-like_sf"/>
</dbReference>
<dbReference type="InterPro" id="IPR002197">
    <property type="entry name" value="HTH_Fis"/>
</dbReference>
<dbReference type="InterPro" id="IPR050207">
    <property type="entry name" value="Trans_regulatory_Fis"/>
</dbReference>
<dbReference type="NCBIfam" id="NF001659">
    <property type="entry name" value="PRK00430.1"/>
    <property type="match status" value="1"/>
</dbReference>
<dbReference type="PANTHER" id="PTHR47918">
    <property type="entry name" value="DNA-BINDING PROTEIN FIS"/>
    <property type="match status" value="1"/>
</dbReference>
<dbReference type="PANTHER" id="PTHR47918:SF1">
    <property type="entry name" value="DNA-BINDING PROTEIN FIS"/>
    <property type="match status" value="1"/>
</dbReference>
<dbReference type="Pfam" id="PF02954">
    <property type="entry name" value="HTH_8"/>
    <property type="match status" value="1"/>
</dbReference>
<dbReference type="PIRSF" id="PIRSF002097">
    <property type="entry name" value="DNA-binding_Fis"/>
    <property type="match status" value="1"/>
</dbReference>
<dbReference type="PRINTS" id="PR01591">
    <property type="entry name" value="DNABINDNGFIS"/>
</dbReference>
<dbReference type="PRINTS" id="PR01590">
    <property type="entry name" value="HTHFIS"/>
</dbReference>
<dbReference type="SUPFAM" id="SSF46689">
    <property type="entry name" value="Homeodomain-like"/>
    <property type="match status" value="1"/>
</dbReference>
<accession>C3LQP6</accession>
<comment type="function">
    <text evidence="1">Activates ribosomal RNA transcription. Plays a direct role in upstream activation of rRNA promoters.</text>
</comment>
<comment type="subunit">
    <text evidence="1">Homodimer.</text>
</comment>
<comment type="similarity">
    <text evidence="1">Belongs to the transcriptional regulatory Fis family.</text>
</comment>
<evidence type="ECO:0000255" key="1">
    <source>
        <dbReference type="HAMAP-Rule" id="MF_00166"/>
    </source>
</evidence>
<name>FIS_VIBCM</name>
<reference key="1">
    <citation type="journal article" date="2008" name="PLoS ONE">
        <title>A recalibrated molecular clock and independent origins for the cholera pandemic clones.</title>
        <authorList>
            <person name="Feng L."/>
            <person name="Reeves P.R."/>
            <person name="Lan R."/>
            <person name="Ren Y."/>
            <person name="Gao C."/>
            <person name="Zhou Z."/>
            <person name="Ren Y."/>
            <person name="Cheng J."/>
            <person name="Wang W."/>
            <person name="Wang J."/>
            <person name="Qian W."/>
            <person name="Li D."/>
            <person name="Wang L."/>
        </authorList>
    </citation>
    <scope>NUCLEOTIDE SEQUENCE [LARGE SCALE GENOMIC DNA]</scope>
    <source>
        <strain>M66-2</strain>
    </source>
</reference>
<gene>
    <name evidence="1" type="primary">fis</name>
    <name type="ordered locus">VCM66_0275</name>
</gene>
<protein>
    <recommendedName>
        <fullName evidence="1">DNA-binding protein Fis</fullName>
    </recommendedName>
</protein>
<sequence length="98" mass="11112">MFEQNLTSEALTVTTVTSQDQITQKPLRDSVKASLKNYLAQLNGQEVTELYELVLAEVEQPLLDTIMQYTRGNQTRAATMMGINRGTLRKKLKKYGMN</sequence>
<organism>
    <name type="scientific">Vibrio cholerae serotype O1 (strain M66-2)</name>
    <dbReference type="NCBI Taxonomy" id="579112"/>
    <lineage>
        <taxon>Bacteria</taxon>
        <taxon>Pseudomonadati</taxon>
        <taxon>Pseudomonadota</taxon>
        <taxon>Gammaproteobacteria</taxon>
        <taxon>Vibrionales</taxon>
        <taxon>Vibrionaceae</taxon>
        <taxon>Vibrio</taxon>
    </lineage>
</organism>
<proteinExistence type="inferred from homology"/>
<keyword id="KW-0010">Activator</keyword>
<keyword id="KW-0238">DNA-binding</keyword>
<keyword id="KW-0804">Transcription</keyword>
<keyword id="KW-0805">Transcription regulation</keyword>